<comment type="function">
    <text evidence="9">ABC transporter; part of the gene cluster that mediates the biosynthesis of echinocandin B, a fungal lipidated cyclic hexapeptide that acts as an antifungal agent (PubMed:22998630).</text>
</comment>
<comment type="subcellular location">
    <subcellularLocation>
        <location evidence="8">Cell membrane</location>
        <topology evidence="1">Multi-pass membrane protein</topology>
    </subcellularLocation>
</comment>
<comment type="biotechnology">
    <text evidence="6">Due to their effectiveness as antifungal agents, echinocandin derivatives can be used for the treatment of human invasive candidiasis (PubMed:22998630).</text>
</comment>
<comment type="similarity">
    <text evidence="8">Belongs to the ABC transporter superfamily. ABCC family. Conjugate transporter (TC 3.A.1.208) subfamily.</text>
</comment>
<keyword id="KW-0067">ATP-binding</keyword>
<keyword id="KW-1003">Cell membrane</keyword>
<keyword id="KW-0325">Glycoprotein</keyword>
<keyword id="KW-0472">Membrane</keyword>
<keyword id="KW-0547">Nucleotide-binding</keyword>
<keyword id="KW-0677">Repeat</keyword>
<keyword id="KW-0812">Transmembrane</keyword>
<keyword id="KW-1133">Transmembrane helix</keyword>
<keyword id="KW-0813">Transport</keyword>
<sequence>MDDSPWPQCDIRVQDTFGPQVSGCYEDFDFTLLFEESILYLPPLLIAASVALLRIWQLRSTENLLKRSGLLSILKPTSTTRLSNAAIAIGFVASPIFAWLSFWEHARSLRPSTILNVYLLGTIPMDAARARTLFRMPGNSAIASIFATIVVCKVVLLVVEAMEKQRLLLDRGWAPEETAGILNRSFLWWFNPLLLSGYKQALTVDKLLAVDEDIGVEKSKDEIRRRWAQAVKQNASSLQDVLLAVYRTELWGGFLPRLCLIGVNYAQPFLVNRVVTFLGQPDTSTSRGVASGLIAAYAIVYMGIAVATAAFHHRSYRMVMMVRGGLILLIYDHTLTLNALSPSKNDSYTLITADIERIVSGLRSLHETWASLIEIALSLWLLETKIRVSAVAAAMVVLVCLLVSGALSGLLGVHQNLWLEAMQKRLNATLATIGSIKGIKATGRTNTLYETILQLRRTEIQKSLKFRELLVALVTLSYLSTTMAPTFAFGTYSILAKIRNMTPLLAAPAFSSLTIMTLLGQAVSGFVESLMGLRQAMASLERIRQYLVGKEAPEPSPNKPGVASTEGLVAWSASLDEPGLDPRVEMRRMSSLQHRFYNLGELQDGLIVLQNHTASWEKASKPVLTDINVTITRGSFVIVIGPIGSGKSTLLHSILGEVPHTTGIRTIQEVDTAFCAQTPWLTNTNVRDNILGASHFDPAWYNAVVKACALHRDFAQLPHGDRSMIGSKGILLSGGQKGRLALARALYARKALLVLDDVFAGLDPKTGQEVFTSLFGARGLLRQGKTTTVLATNSTQNLSMADYIMVLGSEGRLIEQGTPTELLNSGSSLRLEELVKTREGKSKAEPERERPEYARALRNSVLGATPVAARRRFSDMAIYKLYIRTIGWGSWWIFIVLCSGFVVALTLSRENTLALPSACAGVDLLTACLEEIWLKFWTEANARNPHDRLGYYLSLFAVWSALAITFFLGACLHLMLRMVPKAAKIFHGSLLQTVMRAPLVFFSKTDSGEISNHFSQDLELIDMELPRALIGAVIALILCISAMAVIVYSSNYLAATIPGLLGLLYLVQMFYLRTSQQLRVLELETRAPLLSHYMETIQGLVSLRAFGWSKHFKDRHHGHLKVAQQSAYLLFCAQIWLTLTLDIIVAFLAIILVSIAVTVKNSSAASIGLALVNLIAFGANMKGLVYNWTALENAMGAIARVRDFTTETPCEIQVGESHSPSPGWPQRGLIKFKSVTASYDFTSHPVLNDVTFTVQPGEKLAICGRTGCGKSSLVSSLLRLLEVRNGAIEVDGIDISTLSREDVRMSLNVLPQEPFFYHGTIRQNLDPNCLSSDEEILETLALLGLREVISKKGGLDVAMDDGFLSHGQQQLLCLARAILKKSRILILDEVTSSVDQETETLITRVLRDRLQDQTVISIAHRLNTIMDYDKVIILDKGCIVEQGNPQVLALQRSIFASLLRSGDEEPGNGHKHESEGEEE</sequence>
<protein>
    <recommendedName>
        <fullName evidence="7">ABC transporter ecdL</fullName>
    </recommendedName>
    <alternativeName>
        <fullName evidence="7">Echinocandin B biosynthetic cluster protein L</fullName>
    </alternativeName>
</protein>
<organism>
    <name type="scientific">Aspergillus rugulosus</name>
    <name type="common">Emericella rugulosa</name>
    <dbReference type="NCBI Taxonomy" id="41736"/>
    <lineage>
        <taxon>Eukaryota</taxon>
        <taxon>Fungi</taxon>
        <taxon>Dikarya</taxon>
        <taxon>Ascomycota</taxon>
        <taxon>Pezizomycotina</taxon>
        <taxon>Eurotiomycetes</taxon>
        <taxon>Eurotiomycetidae</taxon>
        <taxon>Eurotiales</taxon>
        <taxon>Aspergillaceae</taxon>
        <taxon>Aspergillus</taxon>
        <taxon>Aspergillus subgen. Nidulantes</taxon>
    </lineage>
</organism>
<gene>
    <name evidence="7" type="primary">ecdL</name>
</gene>
<reference key="1">
    <citation type="journal article" date="2012" name="J. Am. Chem. Soc.">
        <title>Identification and characterization of the echinocandin B biosynthetic gene cluster from Emericella rugulosa NRRL 11440.</title>
        <authorList>
            <person name="Cacho R.A."/>
            <person name="Jiang W."/>
            <person name="Chooi Y.H."/>
            <person name="Walsh C.T."/>
            <person name="Tang Y."/>
        </authorList>
    </citation>
    <scope>NUCLEOTIDE SEQUENCE [GENOMIC DNA]</scope>
    <scope>FUNCTION</scope>
    <scope>BIOTECHNOLOGY</scope>
    <source>
        <strain>ATCC 58397 / NRRL 11440</strain>
    </source>
</reference>
<name>ECDL_ASPRU</name>
<proteinExistence type="evidence at protein level"/>
<accession>K0E4D9</accession>
<feature type="chain" id="PRO_0000443850" description="ABC transporter ecdL">
    <location>
        <begin position="1"/>
        <end position="1479"/>
    </location>
</feature>
<feature type="transmembrane region" description="Helical" evidence="1">
    <location>
        <begin position="32"/>
        <end position="52"/>
    </location>
</feature>
<feature type="transmembrane region" description="Helical" evidence="1">
    <location>
        <begin position="82"/>
        <end position="102"/>
    </location>
</feature>
<feature type="transmembrane region" description="Helical" evidence="1">
    <location>
        <begin position="142"/>
        <end position="162"/>
    </location>
</feature>
<feature type="transmembrane region" description="Helical" evidence="1 3">
    <location>
        <begin position="251"/>
        <end position="271"/>
    </location>
</feature>
<feature type="transmembrane region" description="Helical" evidence="1 3">
    <location>
        <begin position="291"/>
        <end position="311"/>
    </location>
</feature>
<feature type="transmembrane region" description="Helical" evidence="1 3">
    <location>
        <begin position="365"/>
        <end position="382"/>
    </location>
</feature>
<feature type="transmembrane region" description="Helical" evidence="1 3">
    <location>
        <begin position="391"/>
        <end position="411"/>
    </location>
</feature>
<feature type="transmembrane region" description="Helical" evidence="1 3">
    <location>
        <begin position="469"/>
        <end position="489"/>
    </location>
</feature>
<feature type="transmembrane region" description="Helical" evidence="1 3">
    <location>
        <begin position="503"/>
        <end position="523"/>
    </location>
</feature>
<feature type="transmembrane region" description="Helical" evidence="1">
    <location>
        <begin position="885"/>
        <end position="905"/>
    </location>
</feature>
<feature type="transmembrane region" description="Helical" evidence="1 3">
    <location>
        <begin position="955"/>
        <end position="975"/>
    </location>
</feature>
<feature type="transmembrane region" description="Helical" evidence="1 3">
    <location>
        <begin position="1028"/>
        <end position="1048"/>
    </location>
</feature>
<feature type="transmembrane region" description="Helical" evidence="1 3">
    <location>
        <begin position="1052"/>
        <end position="1072"/>
    </location>
</feature>
<feature type="transmembrane region" description="Helical" evidence="1 3">
    <location>
        <begin position="1135"/>
        <end position="1155"/>
    </location>
</feature>
<feature type="transmembrane region" description="Helical" evidence="1 3">
    <location>
        <begin position="1165"/>
        <end position="1185"/>
    </location>
</feature>
<feature type="domain" description="ABC transmembrane type-1 1" evidence="3">
    <location>
        <begin position="258"/>
        <end position="535"/>
    </location>
</feature>
<feature type="domain" description="ABC transporter 1" evidence="2">
    <location>
        <begin position="607"/>
        <end position="835"/>
    </location>
</feature>
<feature type="domain" description="ABC transmembrane type-1 2" evidence="3">
    <location>
        <begin position="932"/>
        <end position="1193"/>
    </location>
</feature>
<feature type="domain" description="ABC transporter 2" evidence="2">
    <location>
        <begin position="1230"/>
        <end position="1461"/>
    </location>
</feature>
<feature type="region of interest" description="Disordered" evidence="5">
    <location>
        <begin position="1460"/>
        <end position="1479"/>
    </location>
</feature>
<feature type="compositionally biased region" description="Basic and acidic residues" evidence="5">
    <location>
        <begin position="1461"/>
        <end position="1479"/>
    </location>
</feature>
<feature type="binding site" evidence="2">
    <location>
        <begin position="641"/>
        <end position="648"/>
    </location>
    <ligand>
        <name>ATP</name>
        <dbReference type="ChEBI" id="CHEBI:30616"/>
    </ligand>
</feature>
<feature type="binding site" evidence="2">
    <location>
        <begin position="1264"/>
        <end position="1271"/>
    </location>
    <ligand>
        <name>ATP</name>
        <dbReference type="ChEBI" id="CHEBI:30616"/>
    </ligand>
</feature>
<feature type="glycosylation site" description="N-linked (GlcNAc...) asparagine" evidence="4">
    <location>
        <position position="183"/>
    </location>
</feature>
<feature type="glycosylation site" description="N-linked (GlcNAc...) asparagine" evidence="4">
    <location>
        <position position="234"/>
    </location>
</feature>
<feature type="glycosylation site" description="N-linked (GlcNAc...) asparagine" evidence="4">
    <location>
        <position position="345"/>
    </location>
</feature>
<feature type="glycosylation site" description="N-linked (GlcNAc...) asparagine" evidence="4">
    <location>
        <position position="427"/>
    </location>
</feature>
<feature type="glycosylation site" description="N-linked (GlcNAc...) asparagine" evidence="4">
    <location>
        <position position="611"/>
    </location>
</feature>
<feature type="glycosylation site" description="N-linked (GlcNAc...) asparagine" evidence="4">
    <location>
        <position position="628"/>
    </location>
</feature>
<feature type="glycosylation site" description="N-linked (GlcNAc...) asparagine" evidence="4">
    <location>
        <position position="793"/>
    </location>
</feature>
<feature type="glycosylation site" description="N-linked (GlcNAc...) asparagine" evidence="4">
    <location>
        <position position="797"/>
    </location>
</feature>
<feature type="glycosylation site" description="N-linked (GlcNAc...) asparagine" evidence="4">
    <location>
        <position position="1161"/>
    </location>
</feature>
<feature type="glycosylation site" description="N-linked (GlcNAc...) asparagine" evidence="4">
    <location>
        <position position="1187"/>
    </location>
</feature>
<evidence type="ECO:0000255" key="1"/>
<evidence type="ECO:0000255" key="2">
    <source>
        <dbReference type="PROSITE-ProRule" id="PRU00434"/>
    </source>
</evidence>
<evidence type="ECO:0000255" key="3">
    <source>
        <dbReference type="PROSITE-ProRule" id="PRU00441"/>
    </source>
</evidence>
<evidence type="ECO:0000255" key="4">
    <source>
        <dbReference type="PROSITE-ProRule" id="PRU00498"/>
    </source>
</evidence>
<evidence type="ECO:0000256" key="5">
    <source>
        <dbReference type="SAM" id="MobiDB-lite"/>
    </source>
</evidence>
<evidence type="ECO:0000269" key="6">
    <source>
    </source>
</evidence>
<evidence type="ECO:0000303" key="7">
    <source>
    </source>
</evidence>
<evidence type="ECO:0000305" key="8"/>
<evidence type="ECO:0000305" key="9">
    <source>
    </source>
</evidence>
<dbReference type="EMBL" id="JX421684">
    <property type="protein sequence ID" value="AFT91383.1"/>
    <property type="molecule type" value="Genomic_DNA"/>
</dbReference>
<dbReference type="SMR" id="K0E4D9"/>
<dbReference type="TCDB" id="3.A.1.208.41">
    <property type="family name" value="the atp-binding cassette (abc) superfamily"/>
</dbReference>
<dbReference type="GlyCosmos" id="K0E4D9">
    <property type="glycosylation" value="10 sites, No reported glycans"/>
</dbReference>
<dbReference type="GO" id="GO:0005886">
    <property type="term" value="C:plasma membrane"/>
    <property type="evidence" value="ECO:0007669"/>
    <property type="project" value="UniProtKB-SubCell"/>
</dbReference>
<dbReference type="GO" id="GO:0140359">
    <property type="term" value="F:ABC-type transporter activity"/>
    <property type="evidence" value="ECO:0007669"/>
    <property type="project" value="InterPro"/>
</dbReference>
<dbReference type="GO" id="GO:0005524">
    <property type="term" value="F:ATP binding"/>
    <property type="evidence" value="ECO:0007669"/>
    <property type="project" value="UniProtKB-KW"/>
</dbReference>
<dbReference type="GO" id="GO:0016887">
    <property type="term" value="F:ATP hydrolysis activity"/>
    <property type="evidence" value="ECO:0007669"/>
    <property type="project" value="InterPro"/>
</dbReference>
<dbReference type="CDD" id="cd18580">
    <property type="entry name" value="ABC_6TM_ABCC_D2"/>
    <property type="match status" value="1"/>
</dbReference>
<dbReference type="CDD" id="cd03250">
    <property type="entry name" value="ABCC_MRP_domain1"/>
    <property type="match status" value="1"/>
</dbReference>
<dbReference type="CDD" id="cd03244">
    <property type="entry name" value="ABCC_MRP_domain2"/>
    <property type="match status" value="1"/>
</dbReference>
<dbReference type="FunFam" id="1.20.1560.10:FF:000055">
    <property type="entry name" value="ABC multidrug transporter (Eurofung)"/>
    <property type="match status" value="1"/>
</dbReference>
<dbReference type="FunFam" id="1.20.1560.10:FF:000066">
    <property type="entry name" value="ABC multidrug transporter (Eurofung)"/>
    <property type="match status" value="1"/>
</dbReference>
<dbReference type="FunFam" id="3.40.50.300:FF:000838">
    <property type="entry name" value="ABC multidrug transporter (Eurofung)"/>
    <property type="match status" value="1"/>
</dbReference>
<dbReference type="Gene3D" id="1.20.1560.10">
    <property type="entry name" value="ABC transporter type 1, transmembrane domain"/>
    <property type="match status" value="2"/>
</dbReference>
<dbReference type="Gene3D" id="3.40.50.300">
    <property type="entry name" value="P-loop containing nucleotide triphosphate hydrolases"/>
    <property type="match status" value="2"/>
</dbReference>
<dbReference type="InterPro" id="IPR003593">
    <property type="entry name" value="AAA+_ATPase"/>
</dbReference>
<dbReference type="InterPro" id="IPR011527">
    <property type="entry name" value="ABC1_TM_dom"/>
</dbReference>
<dbReference type="InterPro" id="IPR036640">
    <property type="entry name" value="ABC1_TM_sf"/>
</dbReference>
<dbReference type="InterPro" id="IPR003439">
    <property type="entry name" value="ABC_transporter-like_ATP-bd"/>
</dbReference>
<dbReference type="InterPro" id="IPR017871">
    <property type="entry name" value="ABC_transporter-like_CS"/>
</dbReference>
<dbReference type="InterPro" id="IPR050173">
    <property type="entry name" value="ABC_transporter_C-like"/>
</dbReference>
<dbReference type="InterPro" id="IPR044726">
    <property type="entry name" value="ABCC_6TM_D2"/>
</dbReference>
<dbReference type="InterPro" id="IPR027417">
    <property type="entry name" value="P-loop_NTPase"/>
</dbReference>
<dbReference type="PANTHER" id="PTHR24223:SF399">
    <property type="entry name" value="ABC TRANSPORTER ATNG"/>
    <property type="match status" value="1"/>
</dbReference>
<dbReference type="PANTHER" id="PTHR24223">
    <property type="entry name" value="ATP-BINDING CASSETTE SUB-FAMILY C"/>
    <property type="match status" value="1"/>
</dbReference>
<dbReference type="Pfam" id="PF00664">
    <property type="entry name" value="ABC_membrane"/>
    <property type="match status" value="1"/>
</dbReference>
<dbReference type="Pfam" id="PF00005">
    <property type="entry name" value="ABC_tran"/>
    <property type="match status" value="2"/>
</dbReference>
<dbReference type="SMART" id="SM00382">
    <property type="entry name" value="AAA"/>
    <property type="match status" value="2"/>
</dbReference>
<dbReference type="SUPFAM" id="SSF90123">
    <property type="entry name" value="ABC transporter transmembrane region"/>
    <property type="match status" value="2"/>
</dbReference>
<dbReference type="SUPFAM" id="SSF52540">
    <property type="entry name" value="P-loop containing nucleoside triphosphate hydrolases"/>
    <property type="match status" value="2"/>
</dbReference>
<dbReference type="PROSITE" id="PS50929">
    <property type="entry name" value="ABC_TM1F"/>
    <property type="match status" value="2"/>
</dbReference>
<dbReference type="PROSITE" id="PS00211">
    <property type="entry name" value="ABC_TRANSPORTER_1"/>
    <property type="match status" value="1"/>
</dbReference>
<dbReference type="PROSITE" id="PS50893">
    <property type="entry name" value="ABC_TRANSPORTER_2"/>
    <property type="match status" value="2"/>
</dbReference>